<organism>
    <name type="scientific">Rhodopseudomonas palustris (strain BisA53)</name>
    <dbReference type="NCBI Taxonomy" id="316055"/>
    <lineage>
        <taxon>Bacteria</taxon>
        <taxon>Pseudomonadati</taxon>
        <taxon>Pseudomonadota</taxon>
        <taxon>Alphaproteobacteria</taxon>
        <taxon>Hyphomicrobiales</taxon>
        <taxon>Nitrobacteraceae</taxon>
        <taxon>Rhodopseudomonas</taxon>
    </lineage>
</organism>
<evidence type="ECO:0000255" key="1">
    <source>
        <dbReference type="HAMAP-Rule" id="MF_01961"/>
    </source>
</evidence>
<evidence type="ECO:0000256" key="2">
    <source>
        <dbReference type="SAM" id="MobiDB-lite"/>
    </source>
</evidence>
<sequence length="730" mass="80435">MDAKTDDKDAGKCPFSSGSHAHRNRDWWPDQLDIQVLHHNSKKSDPLGEAFNYAEEFKKLDLAALKQDLTALMTDSQDWWPADFGHYGGLFIRLAWHSAGTYRISDGRGGAGAGQQRFAPLNSWPDNANLDKARRLLWPIKQKYGNKISWADLFVLSGNVALESMGFKTFGFAGGRADTWEPEELYWGPEGTWLGDSRYSGERELSDPLGAVQMGLIYVNPEGPNGNPDPVGSAKDIRETFYRMAMNDEETVALIAGGHTFGKTHGAGDPSLLGPDPEAGALEDQGLGWKSGYGTGFGADAITGGPEVIWSQEPTKWSNHFFENLFNFDYELTKSPAGAQQWVAKNAEPSIPDPFDPSKKRLPTMLTSDLALRFDPIYEKISRRFFENPDQFADAFARAWYKLTHRDMGPVPRYLGPEVPKEVLLWQDPVPAVDHELVSEQDIAALKAKILASGLSVAQLVSAAWASASTFRGSDKRGGANGGRIRLSPQKDWEVNHPAELAQVLSKLEAIQSEFNAQGGGKKVSIADLIVLGGAAAIEKAAQEAGTAVTVPFTPGRTDASQEQTDVESFKPLEPRADGFRNYVSSIRHQFMKPEEALVDKAQLLKLTGPELTVLVGGLRVLGANYGHTTHGVLTDRPERLSNDFFVNLLDMKYAWAPSPTTTGIYEARDRKSGELKWTGTRVDLIFGSHSQLRAFAEVYAQADAKEKFVHDFVAAWTKVMNADRFDIVR</sequence>
<proteinExistence type="inferred from homology"/>
<comment type="function">
    <text evidence="1">Bifunctional enzyme with both catalase and broad-spectrum peroxidase activity.</text>
</comment>
<comment type="catalytic activity">
    <reaction evidence="1">
        <text>H2O2 + AH2 = A + 2 H2O</text>
        <dbReference type="Rhea" id="RHEA:30275"/>
        <dbReference type="ChEBI" id="CHEBI:13193"/>
        <dbReference type="ChEBI" id="CHEBI:15377"/>
        <dbReference type="ChEBI" id="CHEBI:16240"/>
        <dbReference type="ChEBI" id="CHEBI:17499"/>
        <dbReference type="EC" id="1.11.1.21"/>
    </reaction>
</comment>
<comment type="catalytic activity">
    <reaction evidence="1">
        <text>2 H2O2 = O2 + 2 H2O</text>
        <dbReference type="Rhea" id="RHEA:20309"/>
        <dbReference type="ChEBI" id="CHEBI:15377"/>
        <dbReference type="ChEBI" id="CHEBI:15379"/>
        <dbReference type="ChEBI" id="CHEBI:16240"/>
        <dbReference type="EC" id="1.11.1.21"/>
    </reaction>
</comment>
<comment type="cofactor">
    <cofactor evidence="1">
        <name>heme b</name>
        <dbReference type="ChEBI" id="CHEBI:60344"/>
    </cofactor>
    <text evidence="1">Binds 1 heme b (iron(II)-protoporphyrin IX) group per dimer.</text>
</comment>
<comment type="subunit">
    <text evidence="1">Homodimer or homotetramer.</text>
</comment>
<comment type="PTM">
    <text evidence="1">Formation of the three residue Trp-Tyr-Met cross-link is important for the catalase, but not the peroxidase activity of the enzyme.</text>
</comment>
<comment type="similarity">
    <text evidence="1">Belongs to the peroxidase family. Peroxidase/catalase subfamily.</text>
</comment>
<dbReference type="EC" id="1.11.1.21" evidence="1"/>
<dbReference type="EMBL" id="CP000463">
    <property type="protein sequence ID" value="ABJ04212.1"/>
    <property type="molecule type" value="Genomic_DNA"/>
</dbReference>
<dbReference type="SMR" id="Q07V22"/>
<dbReference type="STRING" id="316055.RPE_0253"/>
<dbReference type="PeroxiBase" id="3574">
    <property type="entry name" value="RpCP01_BisA53"/>
</dbReference>
<dbReference type="KEGG" id="rpe:RPE_0253"/>
<dbReference type="eggNOG" id="COG0376">
    <property type="taxonomic scope" value="Bacteria"/>
</dbReference>
<dbReference type="HOGENOM" id="CLU_025424_2_0_5"/>
<dbReference type="OrthoDB" id="9759743at2"/>
<dbReference type="GO" id="GO:0005829">
    <property type="term" value="C:cytosol"/>
    <property type="evidence" value="ECO:0007669"/>
    <property type="project" value="TreeGrafter"/>
</dbReference>
<dbReference type="GO" id="GO:0004096">
    <property type="term" value="F:catalase activity"/>
    <property type="evidence" value="ECO:0007669"/>
    <property type="project" value="UniProtKB-UniRule"/>
</dbReference>
<dbReference type="GO" id="GO:0020037">
    <property type="term" value="F:heme binding"/>
    <property type="evidence" value="ECO:0007669"/>
    <property type="project" value="InterPro"/>
</dbReference>
<dbReference type="GO" id="GO:0046872">
    <property type="term" value="F:metal ion binding"/>
    <property type="evidence" value="ECO:0007669"/>
    <property type="project" value="UniProtKB-KW"/>
</dbReference>
<dbReference type="GO" id="GO:0070301">
    <property type="term" value="P:cellular response to hydrogen peroxide"/>
    <property type="evidence" value="ECO:0007669"/>
    <property type="project" value="TreeGrafter"/>
</dbReference>
<dbReference type="GO" id="GO:0042744">
    <property type="term" value="P:hydrogen peroxide catabolic process"/>
    <property type="evidence" value="ECO:0007669"/>
    <property type="project" value="UniProtKB-KW"/>
</dbReference>
<dbReference type="CDD" id="cd00649">
    <property type="entry name" value="catalase_peroxidase_1"/>
    <property type="match status" value="1"/>
</dbReference>
<dbReference type="CDD" id="cd08200">
    <property type="entry name" value="catalase_peroxidase_2"/>
    <property type="match status" value="1"/>
</dbReference>
<dbReference type="FunFam" id="1.10.420.10:FF:000002">
    <property type="entry name" value="Catalase-peroxidase"/>
    <property type="match status" value="1"/>
</dbReference>
<dbReference type="FunFam" id="1.10.420.10:FF:000004">
    <property type="entry name" value="Catalase-peroxidase"/>
    <property type="match status" value="1"/>
</dbReference>
<dbReference type="FunFam" id="1.10.520.10:FF:000002">
    <property type="entry name" value="Catalase-peroxidase"/>
    <property type="match status" value="1"/>
</dbReference>
<dbReference type="FunFam" id="1.10.520.10:FF:000004">
    <property type="entry name" value="Catalase-peroxidase"/>
    <property type="match status" value="1"/>
</dbReference>
<dbReference type="Gene3D" id="1.10.520.10">
    <property type="match status" value="2"/>
</dbReference>
<dbReference type="Gene3D" id="1.10.420.10">
    <property type="entry name" value="Peroxidase, domain 2"/>
    <property type="match status" value="2"/>
</dbReference>
<dbReference type="HAMAP" id="MF_01961">
    <property type="entry name" value="Catal_peroxid"/>
    <property type="match status" value="1"/>
</dbReference>
<dbReference type="InterPro" id="IPR000763">
    <property type="entry name" value="Catalase_peroxidase"/>
</dbReference>
<dbReference type="InterPro" id="IPR002016">
    <property type="entry name" value="Haem_peroxidase"/>
</dbReference>
<dbReference type="InterPro" id="IPR010255">
    <property type="entry name" value="Haem_peroxidase_sf"/>
</dbReference>
<dbReference type="InterPro" id="IPR019794">
    <property type="entry name" value="Peroxidases_AS"/>
</dbReference>
<dbReference type="InterPro" id="IPR019793">
    <property type="entry name" value="Peroxidases_heam-ligand_BS"/>
</dbReference>
<dbReference type="NCBIfam" id="TIGR00198">
    <property type="entry name" value="cat_per_HPI"/>
    <property type="match status" value="1"/>
</dbReference>
<dbReference type="NCBIfam" id="NF011635">
    <property type="entry name" value="PRK15061.1"/>
    <property type="match status" value="1"/>
</dbReference>
<dbReference type="PANTHER" id="PTHR30555:SF0">
    <property type="entry name" value="CATALASE-PEROXIDASE"/>
    <property type="match status" value="1"/>
</dbReference>
<dbReference type="PANTHER" id="PTHR30555">
    <property type="entry name" value="HYDROPEROXIDASE I, BIFUNCTIONAL CATALASE-PEROXIDASE"/>
    <property type="match status" value="1"/>
</dbReference>
<dbReference type="Pfam" id="PF00141">
    <property type="entry name" value="peroxidase"/>
    <property type="match status" value="2"/>
</dbReference>
<dbReference type="PRINTS" id="PR00460">
    <property type="entry name" value="BPEROXIDASE"/>
</dbReference>
<dbReference type="PRINTS" id="PR00458">
    <property type="entry name" value="PEROXIDASE"/>
</dbReference>
<dbReference type="SUPFAM" id="SSF48113">
    <property type="entry name" value="Heme-dependent peroxidases"/>
    <property type="match status" value="2"/>
</dbReference>
<dbReference type="PROSITE" id="PS00435">
    <property type="entry name" value="PEROXIDASE_1"/>
    <property type="match status" value="1"/>
</dbReference>
<dbReference type="PROSITE" id="PS00436">
    <property type="entry name" value="PEROXIDASE_2"/>
    <property type="match status" value="1"/>
</dbReference>
<dbReference type="PROSITE" id="PS50873">
    <property type="entry name" value="PEROXIDASE_4"/>
    <property type="match status" value="1"/>
</dbReference>
<keyword id="KW-0349">Heme</keyword>
<keyword id="KW-0376">Hydrogen peroxide</keyword>
<keyword id="KW-0408">Iron</keyword>
<keyword id="KW-0479">Metal-binding</keyword>
<keyword id="KW-0560">Oxidoreductase</keyword>
<keyword id="KW-0575">Peroxidase</keyword>
<keyword id="KW-0732">Signal</keyword>
<reference key="1">
    <citation type="submission" date="2006-09" db="EMBL/GenBank/DDBJ databases">
        <title>Complete sequence of Rhodopseudomonas palustris BisA53.</title>
        <authorList>
            <consortium name="US DOE Joint Genome Institute"/>
            <person name="Copeland A."/>
            <person name="Lucas S."/>
            <person name="Lapidus A."/>
            <person name="Barry K."/>
            <person name="Detter J.C."/>
            <person name="Glavina del Rio T."/>
            <person name="Hammon N."/>
            <person name="Israni S."/>
            <person name="Dalin E."/>
            <person name="Tice H."/>
            <person name="Pitluck S."/>
            <person name="Chain P."/>
            <person name="Malfatti S."/>
            <person name="Shin M."/>
            <person name="Vergez L."/>
            <person name="Schmutz J."/>
            <person name="Larimer F."/>
            <person name="Land M."/>
            <person name="Hauser L."/>
            <person name="Pelletier D.A."/>
            <person name="Kyrpides N."/>
            <person name="Kim E."/>
            <person name="Harwood C.S."/>
            <person name="Oda Y."/>
            <person name="Richardson P."/>
        </authorList>
    </citation>
    <scope>NUCLEOTIDE SEQUENCE [LARGE SCALE GENOMIC DNA]</scope>
    <source>
        <strain>BisA53</strain>
    </source>
</reference>
<accession>Q07V22</accession>
<protein>
    <recommendedName>
        <fullName evidence="1">Catalase-peroxidase</fullName>
        <shortName evidence="1">CP</shortName>
        <ecNumber evidence="1">1.11.1.21</ecNumber>
    </recommendedName>
    <alternativeName>
        <fullName evidence="1">Peroxidase/catalase</fullName>
    </alternativeName>
</protein>
<feature type="signal peptide" evidence="1">
    <location>
        <begin position="1"/>
        <end position="21"/>
    </location>
</feature>
<feature type="chain" id="PRO_0000354893" description="Catalase-peroxidase">
    <location>
        <begin position="22"/>
        <end position="730"/>
    </location>
</feature>
<feature type="region of interest" description="Disordered" evidence="2">
    <location>
        <begin position="1"/>
        <end position="24"/>
    </location>
</feature>
<feature type="compositionally biased region" description="Basic and acidic residues" evidence="2">
    <location>
        <begin position="1"/>
        <end position="11"/>
    </location>
</feature>
<feature type="active site" description="Proton acceptor" evidence="1">
    <location>
        <position position="97"/>
    </location>
</feature>
<feature type="binding site" description="axial binding residue" evidence="1">
    <location>
        <position position="259"/>
    </location>
    <ligand>
        <name>heme b</name>
        <dbReference type="ChEBI" id="CHEBI:60344"/>
    </ligand>
    <ligandPart>
        <name>Fe</name>
        <dbReference type="ChEBI" id="CHEBI:18248"/>
    </ligandPart>
</feature>
<feature type="site" description="Transition state stabilizer" evidence="1">
    <location>
        <position position="93"/>
    </location>
</feature>
<feature type="cross-link" description="Tryptophyl-tyrosyl-methioninium (Trp-Tyr) (with M-244)" evidence="1">
    <location>
        <begin position="96"/>
        <end position="218"/>
    </location>
</feature>
<feature type="cross-link" description="Tryptophyl-tyrosyl-methioninium (Tyr-Met) (with W-96)" evidence="1">
    <location>
        <begin position="218"/>
        <end position="244"/>
    </location>
</feature>
<gene>
    <name evidence="1" type="primary">katG</name>
    <name type="ordered locus">RPE_0253</name>
</gene>
<name>KATG_RHOP5</name>